<accession>Q3K107</accession>
<sequence>MQHVNHSSFDKASKAGFIIALGIVYGDIGTSPLYTMQSLVENQGGISSVTESFILGSISLIIWTLTLITTIKYVLVALKADNHHEGGIFSLYTLVRKMTPWLIVPAVIGGATLLSDGALTPAVTVTSAVEGLKVVPSLQHIFQNQSNVIFATLFILLLLFAIQRFGTGVIGKLFGPIMFIWFAFLGISGFLNSFAHPEVFKAINPYYGLKLLFSPENHKGIFILGSIFLATTGAEALYSDLGHVGRGNIHVSWPFVKVAIILSYCGQGAWILANKNAGNELNPFFASIPSQFTMHVVILATLAAIIASQALISGSFTLVSEAMRLKIFPQFRSTYPGDNIGQTYIPVINWFLFAITTSIVLLFKTSAHMEAAYGLAITITMLMTTILLSFFLIQKGVKRGLVLLMMIFFGILEGIFFLASAVKFMHGGYVVVIIAVAIIFIMTIWYKGSKIVSRYVKLLDLKDYIGQLDKLRHDHRYPIYHTNVVYLTNRMEGDMIDKSIMYSILDKRPKKAQVYWFVNIKVTDEPYTAEYKVDMMGTDFIVKVELYLGFKMRQTVSRYLRTIVEELLESGRLPKQGKTYSVRPDSKVGDFRFIVLDERFSSSQNLKPGERFVMLMKSSIKHWTATPIRWFGLQFSEVTTEVVPLIFTANRGLPIKEKIELTTTGD</sequence>
<comment type="function">
    <text evidence="1">Transport of potassium into the cell. Likely operates as a K(+):H(+) symporter.</text>
</comment>
<comment type="catalytic activity">
    <reaction evidence="1">
        <text>K(+)(in) + H(+)(in) = K(+)(out) + H(+)(out)</text>
        <dbReference type="Rhea" id="RHEA:28490"/>
        <dbReference type="ChEBI" id="CHEBI:15378"/>
        <dbReference type="ChEBI" id="CHEBI:29103"/>
    </reaction>
    <physiologicalReaction direction="right-to-left" evidence="1">
        <dbReference type="Rhea" id="RHEA:28492"/>
    </physiologicalReaction>
</comment>
<comment type="subcellular location">
    <subcellularLocation>
        <location evidence="1">Cell membrane</location>
        <topology evidence="1">Multi-pass membrane protein</topology>
    </subcellularLocation>
</comment>
<comment type="similarity">
    <text evidence="1">Belongs to the HAK/KUP transporter (TC 2.A.72) family.</text>
</comment>
<name>KUP_STRA1</name>
<feature type="chain" id="PRO_0000279834" description="Probable potassium transport system protein Kup">
    <location>
        <begin position="1"/>
        <end position="666"/>
    </location>
</feature>
<feature type="transmembrane region" description="Helical" evidence="1">
    <location>
        <begin position="16"/>
        <end position="36"/>
    </location>
</feature>
<feature type="transmembrane region" description="Helical" evidence="1">
    <location>
        <begin position="58"/>
        <end position="78"/>
    </location>
</feature>
<feature type="transmembrane region" description="Helical" evidence="1">
    <location>
        <begin position="99"/>
        <end position="119"/>
    </location>
</feature>
<feature type="transmembrane region" description="Helical" evidence="1">
    <location>
        <begin position="141"/>
        <end position="161"/>
    </location>
</feature>
<feature type="transmembrane region" description="Helical" evidence="1">
    <location>
        <begin position="167"/>
        <end position="187"/>
    </location>
</feature>
<feature type="transmembrane region" description="Helical" evidence="1">
    <location>
        <begin position="221"/>
        <end position="241"/>
    </location>
</feature>
<feature type="transmembrane region" description="Helical" evidence="1">
    <location>
        <begin position="253"/>
        <end position="273"/>
    </location>
</feature>
<feature type="transmembrane region" description="Helical" evidence="1">
    <location>
        <begin position="292"/>
        <end position="312"/>
    </location>
</feature>
<feature type="transmembrane region" description="Helical" evidence="1">
    <location>
        <begin position="343"/>
        <end position="363"/>
    </location>
</feature>
<feature type="transmembrane region" description="Helical" evidence="1">
    <location>
        <begin position="373"/>
        <end position="393"/>
    </location>
</feature>
<feature type="transmembrane region" description="Helical" evidence="1">
    <location>
        <begin position="402"/>
        <end position="422"/>
    </location>
</feature>
<feature type="transmembrane region" description="Helical" evidence="1">
    <location>
        <begin position="424"/>
        <end position="444"/>
    </location>
</feature>
<dbReference type="EMBL" id="CP000114">
    <property type="protein sequence ID" value="ABA46115.1"/>
    <property type="molecule type" value="Genomic_DNA"/>
</dbReference>
<dbReference type="RefSeq" id="WP_001164940.1">
    <property type="nucleotide sequence ID" value="NC_007432.1"/>
</dbReference>
<dbReference type="KEGG" id="sak:SAK_1175"/>
<dbReference type="HOGENOM" id="CLU_008142_4_1_9"/>
<dbReference type="GO" id="GO:0005886">
    <property type="term" value="C:plasma membrane"/>
    <property type="evidence" value="ECO:0007669"/>
    <property type="project" value="UniProtKB-SubCell"/>
</dbReference>
<dbReference type="GO" id="GO:0015079">
    <property type="term" value="F:potassium ion transmembrane transporter activity"/>
    <property type="evidence" value="ECO:0007669"/>
    <property type="project" value="UniProtKB-UniRule"/>
</dbReference>
<dbReference type="GO" id="GO:0015293">
    <property type="term" value="F:symporter activity"/>
    <property type="evidence" value="ECO:0007669"/>
    <property type="project" value="UniProtKB-UniRule"/>
</dbReference>
<dbReference type="HAMAP" id="MF_01522">
    <property type="entry name" value="Kup"/>
    <property type="match status" value="1"/>
</dbReference>
<dbReference type="InterPro" id="IPR003855">
    <property type="entry name" value="K+_transporter"/>
</dbReference>
<dbReference type="InterPro" id="IPR053952">
    <property type="entry name" value="K_trans_C"/>
</dbReference>
<dbReference type="InterPro" id="IPR053951">
    <property type="entry name" value="K_trans_N"/>
</dbReference>
<dbReference type="InterPro" id="IPR023051">
    <property type="entry name" value="Kup"/>
</dbReference>
<dbReference type="PANTHER" id="PTHR30540">
    <property type="entry name" value="OSMOTIC STRESS POTASSIUM TRANSPORTER"/>
    <property type="match status" value="1"/>
</dbReference>
<dbReference type="PANTHER" id="PTHR30540:SF20">
    <property type="entry name" value="POTASSIUM TRANSPORTER 6"/>
    <property type="match status" value="1"/>
</dbReference>
<dbReference type="Pfam" id="PF02705">
    <property type="entry name" value="K_trans"/>
    <property type="match status" value="1"/>
</dbReference>
<dbReference type="Pfam" id="PF22776">
    <property type="entry name" value="K_trans_C"/>
    <property type="match status" value="1"/>
</dbReference>
<keyword id="KW-1003">Cell membrane</keyword>
<keyword id="KW-0406">Ion transport</keyword>
<keyword id="KW-0472">Membrane</keyword>
<keyword id="KW-0630">Potassium</keyword>
<keyword id="KW-0633">Potassium transport</keyword>
<keyword id="KW-0769">Symport</keyword>
<keyword id="KW-0812">Transmembrane</keyword>
<keyword id="KW-1133">Transmembrane helix</keyword>
<keyword id="KW-0813">Transport</keyword>
<evidence type="ECO:0000255" key="1">
    <source>
        <dbReference type="HAMAP-Rule" id="MF_01522"/>
    </source>
</evidence>
<gene>
    <name evidence="1" type="primary">kup</name>
    <name type="ordered locus">SAK_1175</name>
</gene>
<proteinExistence type="inferred from homology"/>
<protein>
    <recommendedName>
        <fullName evidence="1">Probable potassium transport system protein Kup</fullName>
    </recommendedName>
</protein>
<reference key="1">
    <citation type="journal article" date="2005" name="Proc. Natl. Acad. Sci. U.S.A.">
        <title>Genome analysis of multiple pathogenic isolates of Streptococcus agalactiae: implications for the microbial 'pan-genome'.</title>
        <authorList>
            <person name="Tettelin H."/>
            <person name="Masignani V."/>
            <person name="Cieslewicz M.J."/>
            <person name="Donati C."/>
            <person name="Medini D."/>
            <person name="Ward N.L."/>
            <person name="Angiuoli S.V."/>
            <person name="Crabtree J."/>
            <person name="Jones A.L."/>
            <person name="Durkin A.S."/>
            <person name="DeBoy R.T."/>
            <person name="Davidsen T.M."/>
            <person name="Mora M."/>
            <person name="Scarselli M."/>
            <person name="Margarit y Ros I."/>
            <person name="Peterson J.D."/>
            <person name="Hauser C.R."/>
            <person name="Sundaram J.P."/>
            <person name="Nelson W.C."/>
            <person name="Madupu R."/>
            <person name="Brinkac L.M."/>
            <person name="Dodson R.J."/>
            <person name="Rosovitz M.J."/>
            <person name="Sullivan S.A."/>
            <person name="Daugherty S.C."/>
            <person name="Haft D.H."/>
            <person name="Selengut J."/>
            <person name="Gwinn M.L."/>
            <person name="Zhou L."/>
            <person name="Zafar N."/>
            <person name="Khouri H."/>
            <person name="Radune D."/>
            <person name="Dimitrov G."/>
            <person name="Watkins K."/>
            <person name="O'Connor K.J."/>
            <person name="Smith S."/>
            <person name="Utterback T.R."/>
            <person name="White O."/>
            <person name="Rubens C.E."/>
            <person name="Grandi G."/>
            <person name="Madoff L.C."/>
            <person name="Kasper D.L."/>
            <person name="Telford J.L."/>
            <person name="Wessels M.R."/>
            <person name="Rappuoli R."/>
            <person name="Fraser C.M."/>
        </authorList>
    </citation>
    <scope>NUCLEOTIDE SEQUENCE [LARGE SCALE GENOMIC DNA]</scope>
    <source>
        <strain>ATCC 27591 / A909 / CDC SS700</strain>
    </source>
</reference>
<organism>
    <name type="scientific">Streptococcus agalactiae serotype Ia (strain ATCC 27591 / A909 / CDC SS700)</name>
    <dbReference type="NCBI Taxonomy" id="205921"/>
    <lineage>
        <taxon>Bacteria</taxon>
        <taxon>Bacillati</taxon>
        <taxon>Bacillota</taxon>
        <taxon>Bacilli</taxon>
        <taxon>Lactobacillales</taxon>
        <taxon>Streptococcaceae</taxon>
        <taxon>Streptococcus</taxon>
    </lineage>
</organism>